<name>RS8_CLOB1</name>
<organism>
    <name type="scientific">Clostridium botulinum (strain ATCC 19397 / Type A)</name>
    <dbReference type="NCBI Taxonomy" id="441770"/>
    <lineage>
        <taxon>Bacteria</taxon>
        <taxon>Bacillati</taxon>
        <taxon>Bacillota</taxon>
        <taxon>Clostridia</taxon>
        <taxon>Eubacteriales</taxon>
        <taxon>Clostridiaceae</taxon>
        <taxon>Clostridium</taxon>
    </lineage>
</organism>
<gene>
    <name evidence="1" type="primary">rpsH</name>
    <name type="ordered locus">CLB_3523</name>
</gene>
<reference key="1">
    <citation type="journal article" date="2007" name="PLoS ONE">
        <title>Analysis of the neurotoxin complex genes in Clostridium botulinum A1-A4 and B1 strains: BoNT/A3, /Ba4 and /B1 clusters are located within plasmids.</title>
        <authorList>
            <person name="Smith T.J."/>
            <person name="Hill K.K."/>
            <person name="Foley B.T."/>
            <person name="Detter J.C."/>
            <person name="Munk A.C."/>
            <person name="Bruce D.C."/>
            <person name="Doggett N.A."/>
            <person name="Smith L.A."/>
            <person name="Marks J.D."/>
            <person name="Xie G."/>
            <person name="Brettin T.S."/>
        </authorList>
    </citation>
    <scope>NUCLEOTIDE SEQUENCE [LARGE SCALE GENOMIC DNA]</scope>
    <source>
        <strain>ATCC 19397 / Type A</strain>
    </source>
</reference>
<evidence type="ECO:0000255" key="1">
    <source>
        <dbReference type="HAMAP-Rule" id="MF_01302"/>
    </source>
</evidence>
<evidence type="ECO:0000305" key="2"/>
<dbReference type="EMBL" id="CP000726">
    <property type="protein sequence ID" value="ABS34584.1"/>
    <property type="molecule type" value="Genomic_DNA"/>
</dbReference>
<dbReference type="RefSeq" id="WP_003357687.1">
    <property type="nucleotide sequence ID" value="NC_009697.1"/>
</dbReference>
<dbReference type="SMR" id="A7FZ55"/>
<dbReference type="GeneID" id="5184529"/>
<dbReference type="KEGG" id="cba:CLB_3523"/>
<dbReference type="HOGENOM" id="CLU_098428_0_2_9"/>
<dbReference type="GO" id="GO:1990904">
    <property type="term" value="C:ribonucleoprotein complex"/>
    <property type="evidence" value="ECO:0007669"/>
    <property type="project" value="UniProtKB-KW"/>
</dbReference>
<dbReference type="GO" id="GO:0005840">
    <property type="term" value="C:ribosome"/>
    <property type="evidence" value="ECO:0007669"/>
    <property type="project" value="UniProtKB-KW"/>
</dbReference>
<dbReference type="GO" id="GO:0019843">
    <property type="term" value="F:rRNA binding"/>
    <property type="evidence" value="ECO:0007669"/>
    <property type="project" value="UniProtKB-UniRule"/>
</dbReference>
<dbReference type="GO" id="GO:0003735">
    <property type="term" value="F:structural constituent of ribosome"/>
    <property type="evidence" value="ECO:0007669"/>
    <property type="project" value="InterPro"/>
</dbReference>
<dbReference type="GO" id="GO:0006412">
    <property type="term" value="P:translation"/>
    <property type="evidence" value="ECO:0007669"/>
    <property type="project" value="UniProtKB-UniRule"/>
</dbReference>
<dbReference type="FunFam" id="3.30.1370.30:FF:000002">
    <property type="entry name" value="30S ribosomal protein S8"/>
    <property type="match status" value="1"/>
</dbReference>
<dbReference type="FunFam" id="3.30.1490.10:FF:000001">
    <property type="entry name" value="30S ribosomal protein S8"/>
    <property type="match status" value="1"/>
</dbReference>
<dbReference type="Gene3D" id="3.30.1370.30">
    <property type="match status" value="1"/>
</dbReference>
<dbReference type="Gene3D" id="3.30.1490.10">
    <property type="match status" value="1"/>
</dbReference>
<dbReference type="HAMAP" id="MF_01302_B">
    <property type="entry name" value="Ribosomal_uS8_B"/>
    <property type="match status" value="1"/>
</dbReference>
<dbReference type="InterPro" id="IPR000630">
    <property type="entry name" value="Ribosomal_uS8"/>
</dbReference>
<dbReference type="InterPro" id="IPR047863">
    <property type="entry name" value="Ribosomal_uS8_CS"/>
</dbReference>
<dbReference type="InterPro" id="IPR035987">
    <property type="entry name" value="Ribosomal_uS8_sf"/>
</dbReference>
<dbReference type="NCBIfam" id="NF001109">
    <property type="entry name" value="PRK00136.1"/>
    <property type="match status" value="1"/>
</dbReference>
<dbReference type="PANTHER" id="PTHR11758">
    <property type="entry name" value="40S RIBOSOMAL PROTEIN S15A"/>
    <property type="match status" value="1"/>
</dbReference>
<dbReference type="Pfam" id="PF00410">
    <property type="entry name" value="Ribosomal_S8"/>
    <property type="match status" value="1"/>
</dbReference>
<dbReference type="SUPFAM" id="SSF56047">
    <property type="entry name" value="Ribosomal protein S8"/>
    <property type="match status" value="1"/>
</dbReference>
<dbReference type="PROSITE" id="PS00053">
    <property type="entry name" value="RIBOSOMAL_S8"/>
    <property type="match status" value="1"/>
</dbReference>
<feature type="chain" id="PRO_1000051778" description="Small ribosomal subunit protein uS8">
    <location>
        <begin position="1"/>
        <end position="132"/>
    </location>
</feature>
<accession>A7FZ55</accession>
<sequence length="132" mass="14805">MVMSDPIADLLTRIRNANVVRHEVVEVPSSNIKKAIANIMLTEGYIRDLEEYRDGSVDMLRITMKYGQNKERIITGLKRISKPGLRVYCRKDETPKVLNGLGVAVVSTSKGIVTDREARKLGVGGEVLCYIW</sequence>
<protein>
    <recommendedName>
        <fullName evidence="1">Small ribosomal subunit protein uS8</fullName>
    </recommendedName>
    <alternativeName>
        <fullName evidence="2">30S ribosomal protein S8</fullName>
    </alternativeName>
</protein>
<keyword id="KW-0687">Ribonucleoprotein</keyword>
<keyword id="KW-0689">Ribosomal protein</keyword>
<keyword id="KW-0694">RNA-binding</keyword>
<keyword id="KW-0699">rRNA-binding</keyword>
<proteinExistence type="inferred from homology"/>
<comment type="function">
    <text evidence="1">One of the primary rRNA binding proteins, it binds directly to 16S rRNA central domain where it helps coordinate assembly of the platform of the 30S subunit.</text>
</comment>
<comment type="subunit">
    <text evidence="1">Part of the 30S ribosomal subunit. Contacts proteins S5 and S12.</text>
</comment>
<comment type="similarity">
    <text evidence="1">Belongs to the universal ribosomal protein uS8 family.</text>
</comment>